<name>ATPF_MYCTA</name>
<reference key="1">
    <citation type="journal article" date="2008" name="PLoS ONE">
        <title>Genetic basis of virulence attenuation revealed by comparative genomic analysis of Mycobacterium tuberculosis strain H37Ra versus H37Rv.</title>
        <authorList>
            <person name="Zheng H."/>
            <person name="Lu L."/>
            <person name="Wang B."/>
            <person name="Pu S."/>
            <person name="Zhang X."/>
            <person name="Zhu G."/>
            <person name="Shi W."/>
            <person name="Zhang L."/>
            <person name="Wang H."/>
            <person name="Wang S."/>
            <person name="Zhao G."/>
            <person name="Zhang Y."/>
        </authorList>
    </citation>
    <scope>NUCLEOTIDE SEQUENCE [LARGE SCALE GENOMIC DNA]</scope>
    <source>
        <strain>ATCC 25177 / H37Ra</strain>
    </source>
</reference>
<organism>
    <name type="scientific">Mycobacterium tuberculosis (strain ATCC 25177 / H37Ra)</name>
    <dbReference type="NCBI Taxonomy" id="419947"/>
    <lineage>
        <taxon>Bacteria</taxon>
        <taxon>Bacillati</taxon>
        <taxon>Actinomycetota</taxon>
        <taxon>Actinomycetes</taxon>
        <taxon>Mycobacteriales</taxon>
        <taxon>Mycobacteriaceae</taxon>
        <taxon>Mycobacterium</taxon>
        <taxon>Mycobacterium tuberculosis complex</taxon>
    </lineage>
</organism>
<dbReference type="EMBL" id="CP000611">
    <property type="protein sequence ID" value="ABQ73055.1"/>
    <property type="molecule type" value="Genomic_DNA"/>
</dbReference>
<dbReference type="RefSeq" id="WP_003898818.1">
    <property type="nucleotide sequence ID" value="NZ_CP016972.1"/>
</dbReference>
<dbReference type="SMR" id="A5U205"/>
<dbReference type="KEGG" id="mra:MRA_1314"/>
<dbReference type="eggNOG" id="COG0711">
    <property type="taxonomic scope" value="Bacteria"/>
</dbReference>
<dbReference type="HOGENOM" id="CLU_079215_5_2_11"/>
<dbReference type="Proteomes" id="UP000001988">
    <property type="component" value="Chromosome"/>
</dbReference>
<dbReference type="GO" id="GO:0005886">
    <property type="term" value="C:plasma membrane"/>
    <property type="evidence" value="ECO:0007669"/>
    <property type="project" value="UniProtKB-SubCell"/>
</dbReference>
<dbReference type="GO" id="GO:0045259">
    <property type="term" value="C:proton-transporting ATP synthase complex"/>
    <property type="evidence" value="ECO:0007669"/>
    <property type="project" value="UniProtKB-KW"/>
</dbReference>
<dbReference type="GO" id="GO:0046933">
    <property type="term" value="F:proton-transporting ATP synthase activity, rotational mechanism"/>
    <property type="evidence" value="ECO:0007669"/>
    <property type="project" value="UniProtKB-UniRule"/>
</dbReference>
<dbReference type="GO" id="GO:0046961">
    <property type="term" value="F:proton-transporting ATPase activity, rotational mechanism"/>
    <property type="evidence" value="ECO:0007669"/>
    <property type="project" value="TreeGrafter"/>
</dbReference>
<dbReference type="CDD" id="cd06503">
    <property type="entry name" value="ATP-synt_Fo_b"/>
    <property type="match status" value="1"/>
</dbReference>
<dbReference type="Gene3D" id="1.20.5.620">
    <property type="entry name" value="F1F0 ATP synthase subunit B, membrane domain"/>
    <property type="match status" value="1"/>
</dbReference>
<dbReference type="HAMAP" id="MF_01398">
    <property type="entry name" value="ATP_synth_b_bprime"/>
    <property type="match status" value="1"/>
</dbReference>
<dbReference type="InterPro" id="IPR028987">
    <property type="entry name" value="ATP_synth_B-like_membr_sf"/>
</dbReference>
<dbReference type="InterPro" id="IPR002146">
    <property type="entry name" value="ATP_synth_b/b'su_bac/chlpt"/>
</dbReference>
<dbReference type="InterPro" id="IPR050059">
    <property type="entry name" value="ATP_synthase_B_chain"/>
</dbReference>
<dbReference type="NCBIfam" id="NF004412">
    <property type="entry name" value="PRK05759.1-3"/>
    <property type="match status" value="1"/>
</dbReference>
<dbReference type="PANTHER" id="PTHR33445:SF1">
    <property type="entry name" value="ATP SYNTHASE SUBUNIT B"/>
    <property type="match status" value="1"/>
</dbReference>
<dbReference type="PANTHER" id="PTHR33445">
    <property type="entry name" value="ATP SYNTHASE SUBUNIT B', CHLOROPLASTIC"/>
    <property type="match status" value="1"/>
</dbReference>
<dbReference type="Pfam" id="PF00430">
    <property type="entry name" value="ATP-synt_B"/>
    <property type="match status" value="1"/>
</dbReference>
<dbReference type="SUPFAM" id="SSF81573">
    <property type="entry name" value="F1F0 ATP synthase subunit B, membrane domain"/>
    <property type="match status" value="1"/>
</dbReference>
<accession>A5U205</accession>
<protein>
    <recommendedName>
        <fullName evidence="1">ATP synthase subunit b</fullName>
    </recommendedName>
    <alternativeName>
        <fullName evidence="1">ATP synthase F(0) sector subunit b</fullName>
    </alternativeName>
    <alternativeName>
        <fullName evidence="1">ATPase subunit I</fullName>
    </alternativeName>
    <alternativeName>
        <fullName evidence="1">F-type ATPase subunit b</fullName>
        <shortName evidence="1">F-ATPase subunit b</shortName>
    </alternativeName>
</protein>
<gene>
    <name evidence="1" type="primary">atpF</name>
    <name type="ordered locus">MRA_1314</name>
</gene>
<evidence type="ECO:0000255" key="1">
    <source>
        <dbReference type="HAMAP-Rule" id="MF_01398"/>
    </source>
</evidence>
<keyword id="KW-0066">ATP synthesis</keyword>
<keyword id="KW-1003">Cell membrane</keyword>
<keyword id="KW-0138">CF(0)</keyword>
<keyword id="KW-0375">Hydrogen ion transport</keyword>
<keyword id="KW-0406">Ion transport</keyword>
<keyword id="KW-0472">Membrane</keyword>
<keyword id="KW-1185">Reference proteome</keyword>
<keyword id="KW-0812">Transmembrane</keyword>
<keyword id="KW-1133">Transmembrane helix</keyword>
<keyword id="KW-0813">Transport</keyword>
<sequence length="171" mass="18325">MGEVSAIVLAASQAAEEGGESSNFLIPNGTFFVVLAIFLVVLAVIGTFVVPPILKVLRERDAMVAKTLADNKKSDEQFAAAQADYDEAMTEARVQASSLRDNARADGRKVIEDARVRAEQQVASTLQTAHEQLKRERDAVELDLRAHVGTMSATLASRILGVDLTASAATR</sequence>
<feature type="chain" id="PRO_0000368603" description="ATP synthase subunit b">
    <location>
        <begin position="1"/>
        <end position="171"/>
    </location>
</feature>
<feature type="transmembrane region" description="Helical" evidence="1">
    <location>
        <begin position="31"/>
        <end position="51"/>
    </location>
</feature>
<comment type="function">
    <text evidence="1">F(1)F(0) ATP synthase produces ATP from ADP in the presence of a proton or sodium gradient. F-type ATPases consist of two structural domains, F(1) containing the extramembraneous catalytic core and F(0) containing the membrane proton channel, linked together by a central stalk and a peripheral stalk. During catalysis, ATP synthesis in the catalytic domain of F(1) is coupled via a rotary mechanism of the central stalk subunits to proton translocation.</text>
</comment>
<comment type="function">
    <text evidence="1">Component of the F(0) channel, it forms part of the peripheral stalk, linking F(1) to F(0).</text>
</comment>
<comment type="subunit">
    <text evidence="1">F-type ATPases have 2 components, F(1) - the catalytic core - and F(0) - the membrane proton channel. F(1) has five subunits: alpha(3), beta(3), gamma(1), delta(1), epsilon(1). F(0) has three main subunits: a(1), b(2) and c(10-14). The alpha and beta chains form an alternating ring which encloses part of the gamma chain. F(1) is attached to F(0) by a central stalk formed by the gamma and epsilon chains, while a peripheral stalk is formed by the delta and b chains.</text>
</comment>
<comment type="subcellular location">
    <subcellularLocation>
        <location evidence="1">Cell membrane</location>
        <topology evidence="1">Single-pass membrane protein</topology>
    </subcellularLocation>
</comment>
<comment type="similarity">
    <text evidence="1">Belongs to the ATPase B chain family.</text>
</comment>
<proteinExistence type="inferred from homology"/>